<sequence length="265" mass="30437">MEFLKRSFAPLTEKQWQEIDNRAREIFKTQLYGRKFVDVEGPYGWEYAAHPLGEVEVLSDENEVVKWGLRKSLPLIELRATFTLDLWELDNLERGKPNVDLSSLEETVRKVAEFEDEVIFRGCEKSGVKGLLSFEERKIECGSTPKDLLEAIVRALSIFSKDGIEGPYTLVINTDRWVSFLKEEAGHYPLEKRVEECLRGGKIITTPRIEDALVVSERGGDFKLILGQDLSIGYEDREKDAVRLFITETFTFQVVNPEALILLKF</sequence>
<evidence type="ECO:0000250" key="1">
    <source>
        <dbReference type="UniProtKB" id="Q9WZP2"/>
    </source>
</evidence>
<evidence type="ECO:0000305" key="2"/>
<gene>
    <name evidence="2" type="primary">enc</name>
    <name type="ordered locus">Tpet_0144</name>
</gene>
<reference key="1">
    <citation type="submission" date="2007-05" db="EMBL/GenBank/DDBJ databases">
        <title>Complete sequence of Thermotoga petrophila RKU-1.</title>
        <authorList>
            <consortium name="US DOE Joint Genome Institute"/>
            <person name="Copeland A."/>
            <person name="Lucas S."/>
            <person name="Lapidus A."/>
            <person name="Barry K."/>
            <person name="Glavina del Rio T."/>
            <person name="Dalin E."/>
            <person name="Tice H."/>
            <person name="Pitluck S."/>
            <person name="Sims D."/>
            <person name="Brettin T."/>
            <person name="Bruce D."/>
            <person name="Detter J.C."/>
            <person name="Han C."/>
            <person name="Tapia R."/>
            <person name="Schmutz J."/>
            <person name="Larimer F."/>
            <person name="Land M."/>
            <person name="Hauser L."/>
            <person name="Kyrpides N."/>
            <person name="Mikhailova N."/>
            <person name="Nelson K."/>
            <person name="Gogarten J.P."/>
            <person name="Noll K."/>
            <person name="Richardson P."/>
        </authorList>
    </citation>
    <scope>NUCLEOTIDE SEQUENCE [LARGE SCALE GENOMIC DNA]</scope>
    <source>
        <strain>ATCC BAA-488 / DSM 13995 / JCM 10881 / RKU-1</strain>
    </source>
</reference>
<reference key="2">
    <citation type="journal article" date="2021" name="Nat. Commun.">
        <title>Large-scale computational discovery and analysis of virus-derived microbial nanocompartments.</title>
        <authorList>
            <person name="Andreas M.P."/>
            <person name="Giessen T.W."/>
        </authorList>
    </citation>
    <scope>CLASSIFICATION</scope>
</reference>
<dbReference type="EMBL" id="CP000702">
    <property type="protein sequence ID" value="ABQ46173.1"/>
    <property type="molecule type" value="Genomic_DNA"/>
</dbReference>
<dbReference type="RefSeq" id="WP_011942839.1">
    <property type="nucleotide sequence ID" value="NC_009486.1"/>
</dbReference>
<dbReference type="SMR" id="A5IJ00"/>
<dbReference type="STRING" id="390874.Tpet_0144"/>
<dbReference type="MEROPS" id="U56.001"/>
<dbReference type="KEGG" id="tpt:Tpet_0144"/>
<dbReference type="eggNOG" id="COG1659">
    <property type="taxonomic scope" value="Bacteria"/>
</dbReference>
<dbReference type="HOGENOM" id="CLU_089875_1_0_0"/>
<dbReference type="Proteomes" id="UP000006558">
    <property type="component" value="Chromosome"/>
</dbReference>
<dbReference type="GO" id="GO:0140737">
    <property type="term" value="C:encapsulin nanocompartment"/>
    <property type="evidence" value="ECO:0007669"/>
    <property type="project" value="UniProtKB-SubCell"/>
</dbReference>
<dbReference type="GO" id="GO:0006879">
    <property type="term" value="P:intracellular iron ion homeostasis"/>
    <property type="evidence" value="ECO:0007669"/>
    <property type="project" value="UniProtKB-KW"/>
</dbReference>
<dbReference type="GO" id="GO:0006826">
    <property type="term" value="P:iron ion transport"/>
    <property type="evidence" value="ECO:0007669"/>
    <property type="project" value="UniProtKB-KW"/>
</dbReference>
<dbReference type="Gene3D" id="3.30.2400.30">
    <property type="match status" value="1"/>
</dbReference>
<dbReference type="Gene3D" id="3.30.2320.10">
    <property type="entry name" value="hypothetical protein PF0899 domain"/>
    <property type="match status" value="1"/>
</dbReference>
<dbReference type="InterPro" id="IPR007544">
    <property type="entry name" value="ENCAP"/>
</dbReference>
<dbReference type="InterPro" id="IPR051429">
    <property type="entry name" value="Encapsulin_nc"/>
</dbReference>
<dbReference type="NCBIfam" id="NF041155">
    <property type="entry name" value="encap_f1"/>
    <property type="match status" value="1"/>
</dbReference>
<dbReference type="PANTHER" id="PTHR37165">
    <property type="entry name" value="PEPTIDASE U56 FAMILY"/>
    <property type="match status" value="1"/>
</dbReference>
<dbReference type="PANTHER" id="PTHR37165:SF1">
    <property type="entry name" value="TYPE 1 ENCAPSULIN SHELL PROTEIN"/>
    <property type="match status" value="1"/>
</dbReference>
<dbReference type="Pfam" id="PF04454">
    <property type="entry name" value="Linocin_M18"/>
    <property type="match status" value="1"/>
</dbReference>
<dbReference type="PIRSF" id="PIRSF019254">
    <property type="entry name" value="CFP29"/>
    <property type="match status" value="1"/>
</dbReference>
<accession>A5IJ00</accession>
<feature type="chain" id="PRO_0000343951" description="Type 1 encapsulin shell protein">
    <location>
        <begin position="1"/>
        <end position="265"/>
    </location>
</feature>
<feature type="region of interest" description="Pore-forming loop" evidence="1">
    <location>
        <begin position="184"/>
        <end position="189"/>
    </location>
</feature>
<feature type="binding site" evidence="1">
    <location>
        <begin position="79"/>
        <end position="81"/>
    </location>
    <ligand>
        <name>FMN</name>
        <dbReference type="ChEBI" id="CHEBI:58210"/>
    </ligand>
</feature>
<feature type="binding site" evidence="1">
    <location>
        <position position="87"/>
    </location>
    <ligand>
        <name>FMN</name>
        <dbReference type="ChEBI" id="CHEBI:58210"/>
    </ligand>
</feature>
<feature type="binding site" evidence="1">
    <location>
        <position position="235"/>
    </location>
    <ligand>
        <name>FMN</name>
        <dbReference type="ChEBI" id="CHEBI:58210"/>
    </ligand>
</feature>
<proteinExistence type="inferred from homology"/>
<protein>
    <recommendedName>
        <fullName evidence="1">Type 1 encapsulin shell protein</fullName>
    </recommendedName>
    <alternativeName>
        <fullName>Maritimacin</fullName>
    </alternativeName>
</protein>
<keyword id="KW-1284">Encapsulin nanocompartment</keyword>
<keyword id="KW-0285">Flavoprotein</keyword>
<keyword id="KW-0288">FMN</keyword>
<keyword id="KW-0406">Ion transport</keyword>
<keyword id="KW-0408">Iron</keyword>
<keyword id="KW-0409">Iron storage</keyword>
<keyword id="KW-0410">Iron transport</keyword>
<keyword id="KW-0813">Transport</keyword>
<name>ENCAP_THEP1</name>
<organism>
    <name type="scientific">Thermotoga petrophila (strain ATCC BAA-488 / DSM 13995 / JCM 10881 / RKU-1)</name>
    <dbReference type="NCBI Taxonomy" id="390874"/>
    <lineage>
        <taxon>Bacteria</taxon>
        <taxon>Thermotogati</taxon>
        <taxon>Thermotogota</taxon>
        <taxon>Thermotogae</taxon>
        <taxon>Thermotogales</taxon>
        <taxon>Thermotogaceae</taxon>
        <taxon>Thermotoga</taxon>
    </lineage>
</organism>
<comment type="function">
    <text evidence="1">Shell component of a type 1 encapsulin nanocompartment. Assembles into proteinaceous shells 23-24 nm in diameter with 2-2.5 nm thick walls. Cargo protein Flp (ferritin-like protein, may store iron) is targeted to the interior via its C-terminal extension.</text>
</comment>
<comment type="cofactor">
    <cofactor evidence="1">
        <name>FMN</name>
        <dbReference type="ChEBI" id="CHEBI:58210"/>
    </cofactor>
</comment>
<comment type="subunit">
    <text evidence="1">This encapsulin nanocompartment is formed by 60 subunits; monomers form pentamers which assemble to form shells. There are 12 pores where the pentamers meet as well as 3-fold axis channels and dimer channels; none are larger than 3-4 Angstroms in diameter. The N-terminus of the protein is inside the shell, the C-terminus is outside.</text>
</comment>
<comment type="subcellular location">
    <subcellularLocation>
        <location evidence="1">Encapsulin nanocompartment</location>
    </subcellularLocation>
</comment>
<comment type="similarity">
    <text evidence="2">Belongs to the encapsulin family. Family 1 subfamily.</text>
</comment>